<keyword id="KW-0002">3D-structure</keyword>
<keyword id="KW-0119">Carbohydrate metabolism</keyword>
<keyword id="KW-0413">Isomerase</keyword>
<keyword id="KW-1185">Reference proteome</keyword>
<organism>
    <name type="scientific">Vibrio cholerae serotype O1 (strain ATCC 39315 / El Tor Inaba N16961)</name>
    <dbReference type="NCBI Taxonomy" id="243277"/>
    <lineage>
        <taxon>Bacteria</taxon>
        <taxon>Pseudomonadati</taxon>
        <taxon>Pseudomonadota</taxon>
        <taxon>Gammaproteobacteria</taxon>
        <taxon>Vibrionales</taxon>
        <taxon>Vibrionaceae</taxon>
        <taxon>Vibrio</taxon>
    </lineage>
</organism>
<reference key="1">
    <citation type="journal article" date="2000" name="Nature">
        <title>DNA sequence of both chromosomes of the cholera pathogen Vibrio cholerae.</title>
        <authorList>
            <person name="Heidelberg J.F."/>
            <person name="Eisen J.A."/>
            <person name="Nelson W.C."/>
            <person name="Clayton R.A."/>
            <person name="Gwinn M.L."/>
            <person name="Dodson R.J."/>
            <person name="Haft D.H."/>
            <person name="Hickey E.K."/>
            <person name="Peterson J.D."/>
            <person name="Umayam L.A."/>
            <person name="Gill S.R."/>
            <person name="Nelson K.E."/>
            <person name="Read T.D."/>
            <person name="Tettelin H."/>
            <person name="Richardson D.L."/>
            <person name="Ermolaeva M.D."/>
            <person name="Vamathevan J.J."/>
            <person name="Bass S."/>
            <person name="Qin H."/>
            <person name="Dragoi I."/>
            <person name="Sellers P."/>
            <person name="McDonald L.A."/>
            <person name="Utterback T.R."/>
            <person name="Fleischmann R.D."/>
            <person name="Nierman W.C."/>
            <person name="White O."/>
            <person name="Salzberg S.L."/>
            <person name="Smith H.O."/>
            <person name="Colwell R.R."/>
            <person name="Mekalanos J.J."/>
            <person name="Venter J.C."/>
            <person name="Fraser C.M."/>
        </authorList>
    </citation>
    <scope>NUCLEOTIDE SEQUENCE [LARGE SCALE GENOMIC DNA]</scope>
    <source>
        <strain>ATCC 39315 / El Tor Inaba N16961</strain>
    </source>
</reference>
<sequence>MRPVVRKNFLNIEELKRFLNGQTVVSIQPVTGSPLDKTDFIVAMAIAVEQAGAKALRIEGVNNVAAVSAAVTIPIIGIVKRDLPDSPIRITPFVSDVDGLANAGATVIAFDATDRTRPESRERIAQAIKNTGCFAMADCSTFEDGLWANSQGVEIVGSTLSGYVGDIEPTVPDFQLVKAFSEAGFFTMAEGRYNTPELAAKAIESGAVAVTVGSALTRLEVVTQWFNNATQAAGERKCAH</sequence>
<name>NANE_VIBCH</name>
<gene>
    <name evidence="1" type="primary">nanE</name>
    <name type="ordered locus">VC_1781</name>
</gene>
<feature type="chain" id="PRO_0000179817" description="Putative N-acetylmannosamine-6-phosphate 2-epimerase">
    <location>
        <begin position="1"/>
        <end position="240"/>
    </location>
</feature>
<feature type="helix" evidence="2">
    <location>
        <begin position="12"/>
        <end position="19"/>
    </location>
</feature>
<feature type="strand" evidence="2">
    <location>
        <begin position="23"/>
        <end position="27"/>
    </location>
</feature>
<feature type="helix" evidence="2">
    <location>
        <begin position="38"/>
        <end position="51"/>
    </location>
</feature>
<feature type="strand" evidence="2">
    <location>
        <begin position="56"/>
        <end position="60"/>
    </location>
</feature>
<feature type="helix" evidence="2">
    <location>
        <begin position="61"/>
        <end position="70"/>
    </location>
</feature>
<feature type="strand" evidence="2">
    <location>
        <begin position="75"/>
        <end position="78"/>
    </location>
</feature>
<feature type="helix" evidence="2">
    <location>
        <begin position="94"/>
        <end position="103"/>
    </location>
</feature>
<feature type="strand" evidence="2">
    <location>
        <begin position="106"/>
        <end position="111"/>
    </location>
</feature>
<feature type="helix" evidence="2">
    <location>
        <begin position="121"/>
        <end position="130"/>
    </location>
</feature>
<feature type="strand" evidence="2">
    <location>
        <begin position="134"/>
        <end position="138"/>
    </location>
</feature>
<feature type="helix" evidence="2">
    <location>
        <begin position="142"/>
        <end position="150"/>
    </location>
</feature>
<feature type="strand" evidence="2">
    <location>
        <begin position="154"/>
        <end position="157"/>
    </location>
</feature>
<feature type="turn" evidence="2">
    <location>
        <begin position="159"/>
        <end position="162"/>
    </location>
</feature>
<feature type="strand" evidence="2">
    <location>
        <begin position="163"/>
        <end position="167"/>
    </location>
</feature>
<feature type="helix" evidence="2">
    <location>
        <begin position="174"/>
        <end position="182"/>
    </location>
</feature>
<feature type="strand" evidence="2">
    <location>
        <begin position="186"/>
        <end position="191"/>
    </location>
</feature>
<feature type="helix" evidence="2">
    <location>
        <begin position="196"/>
        <end position="204"/>
    </location>
</feature>
<feature type="strand" evidence="2">
    <location>
        <begin position="208"/>
        <end position="212"/>
    </location>
</feature>
<feature type="helix" evidence="2">
    <location>
        <begin position="214"/>
        <end position="217"/>
    </location>
</feature>
<feature type="helix" evidence="2">
    <location>
        <begin position="219"/>
        <end position="237"/>
    </location>
</feature>
<proteinExistence type="evidence at protein level"/>
<dbReference type="EC" id="5.1.3.9" evidence="1"/>
<dbReference type="EMBL" id="AE003852">
    <property type="protein sequence ID" value="AAF94930.1"/>
    <property type="molecule type" value="Genomic_DNA"/>
</dbReference>
<dbReference type="PIR" id="B82158">
    <property type="entry name" value="B82158"/>
</dbReference>
<dbReference type="RefSeq" id="NP_231416.1">
    <property type="nucleotide sequence ID" value="NC_002505.1"/>
</dbReference>
<dbReference type="RefSeq" id="WP_001889711.1">
    <property type="nucleotide sequence ID" value="NZ_LT906614.1"/>
</dbReference>
<dbReference type="PDB" id="5ZJB">
    <property type="method" value="X-ray"/>
    <property type="resolution" value="1.70 A"/>
    <property type="chains" value="A/B=6-240"/>
</dbReference>
<dbReference type="PDB" id="5ZJN">
    <property type="method" value="X-ray"/>
    <property type="resolution" value="2.66 A"/>
    <property type="chains" value="A/B=6-240"/>
</dbReference>
<dbReference type="PDB" id="5ZJP">
    <property type="method" value="X-ray"/>
    <property type="resolution" value="2.66 A"/>
    <property type="chains" value="A/B=7-236"/>
</dbReference>
<dbReference type="PDBsum" id="5ZJB"/>
<dbReference type="PDBsum" id="5ZJN"/>
<dbReference type="PDBsum" id="5ZJP"/>
<dbReference type="SMR" id="Q9KR62"/>
<dbReference type="STRING" id="243277.VC_1781"/>
<dbReference type="DNASU" id="2613661"/>
<dbReference type="EnsemblBacteria" id="AAF94930">
    <property type="protein sequence ID" value="AAF94930"/>
    <property type="gene ID" value="VC_1781"/>
</dbReference>
<dbReference type="KEGG" id="vch:VC_1781"/>
<dbReference type="PATRIC" id="fig|243277.26.peg.1700"/>
<dbReference type="eggNOG" id="COG3010">
    <property type="taxonomic scope" value="Bacteria"/>
</dbReference>
<dbReference type="HOGENOM" id="CLU_086300_0_0_6"/>
<dbReference type="UniPathway" id="UPA00629">
    <property type="reaction ID" value="UER00682"/>
</dbReference>
<dbReference type="Proteomes" id="UP000000584">
    <property type="component" value="Chromosome 1"/>
</dbReference>
<dbReference type="GO" id="GO:0005829">
    <property type="term" value="C:cytosol"/>
    <property type="evidence" value="ECO:0000318"/>
    <property type="project" value="GO_Central"/>
</dbReference>
<dbReference type="GO" id="GO:0047465">
    <property type="term" value="F:N-acylglucosamine-6-phosphate 2-epimerase activity"/>
    <property type="evidence" value="ECO:0007669"/>
    <property type="project" value="UniProtKB-EC"/>
</dbReference>
<dbReference type="GO" id="GO:0005975">
    <property type="term" value="P:carbohydrate metabolic process"/>
    <property type="evidence" value="ECO:0007669"/>
    <property type="project" value="UniProtKB-UniRule"/>
</dbReference>
<dbReference type="GO" id="GO:0006053">
    <property type="term" value="P:N-acetylmannosamine catabolic process"/>
    <property type="evidence" value="ECO:0000318"/>
    <property type="project" value="GO_Central"/>
</dbReference>
<dbReference type="GO" id="GO:0019262">
    <property type="term" value="P:N-acetylneuraminate catabolic process"/>
    <property type="evidence" value="ECO:0000318"/>
    <property type="project" value="GO_Central"/>
</dbReference>
<dbReference type="CDD" id="cd04729">
    <property type="entry name" value="NanE"/>
    <property type="match status" value="1"/>
</dbReference>
<dbReference type="FunFam" id="3.20.20.70:FF:000035">
    <property type="entry name" value="Putative N-acetylmannosamine-6-phosphate 2-epimerase"/>
    <property type="match status" value="1"/>
</dbReference>
<dbReference type="Gene3D" id="3.20.20.70">
    <property type="entry name" value="Aldolase class I"/>
    <property type="match status" value="1"/>
</dbReference>
<dbReference type="HAMAP" id="MF_01235">
    <property type="entry name" value="ManNAc6P_epimer"/>
    <property type="match status" value="1"/>
</dbReference>
<dbReference type="InterPro" id="IPR013785">
    <property type="entry name" value="Aldolase_TIM"/>
</dbReference>
<dbReference type="InterPro" id="IPR007260">
    <property type="entry name" value="NanE"/>
</dbReference>
<dbReference type="InterPro" id="IPR011060">
    <property type="entry name" value="RibuloseP-bd_barrel"/>
</dbReference>
<dbReference type="NCBIfam" id="NF002231">
    <property type="entry name" value="PRK01130.1"/>
    <property type="match status" value="1"/>
</dbReference>
<dbReference type="PANTHER" id="PTHR36204">
    <property type="entry name" value="N-ACETYLMANNOSAMINE-6-PHOSPHATE 2-EPIMERASE-RELATED"/>
    <property type="match status" value="1"/>
</dbReference>
<dbReference type="PANTHER" id="PTHR36204:SF1">
    <property type="entry name" value="N-ACETYLMANNOSAMINE-6-PHOSPHATE 2-EPIMERASE-RELATED"/>
    <property type="match status" value="1"/>
</dbReference>
<dbReference type="Pfam" id="PF04131">
    <property type="entry name" value="NanE"/>
    <property type="match status" value="1"/>
</dbReference>
<dbReference type="SUPFAM" id="SSF51366">
    <property type="entry name" value="Ribulose-phoshate binding barrel"/>
    <property type="match status" value="1"/>
</dbReference>
<accession>Q9KR62</accession>
<evidence type="ECO:0000255" key="1">
    <source>
        <dbReference type="HAMAP-Rule" id="MF_01235"/>
    </source>
</evidence>
<evidence type="ECO:0007829" key="2">
    <source>
        <dbReference type="PDB" id="5ZJB"/>
    </source>
</evidence>
<comment type="function">
    <text evidence="1">Converts N-acetylmannosamine-6-phosphate (ManNAc-6-P) to N-acetylglucosamine-6-phosphate (GlcNAc-6-P).</text>
</comment>
<comment type="catalytic activity">
    <reaction evidence="1">
        <text>an N-acyl-D-glucosamine 6-phosphate = an N-acyl-D-mannosamine 6-phosphate</text>
        <dbReference type="Rhea" id="RHEA:23932"/>
        <dbReference type="ChEBI" id="CHEBI:57599"/>
        <dbReference type="ChEBI" id="CHEBI:57666"/>
        <dbReference type="EC" id="5.1.3.9"/>
    </reaction>
</comment>
<comment type="pathway">
    <text evidence="1">Amino-sugar metabolism; N-acetylneuraminate degradation; D-fructose 6-phosphate from N-acetylneuraminate: step 3/5.</text>
</comment>
<comment type="similarity">
    <text evidence="1">Belongs to the NanE family.</text>
</comment>
<protein>
    <recommendedName>
        <fullName evidence="1">Putative N-acetylmannosamine-6-phosphate 2-epimerase</fullName>
        <ecNumber evidence="1">5.1.3.9</ecNumber>
    </recommendedName>
    <alternativeName>
        <fullName evidence="1">ManNAc-6-P epimerase</fullName>
    </alternativeName>
</protein>